<proteinExistence type="evidence at protein level"/>
<reference key="1">
    <citation type="journal article" date="1987" name="Biol. Chem. Hoppe-Seyler">
        <title>Primary structure and functional properties of the hemoglobin from the free-tailed bat Tadarida brasiliensis (Chiroptera). Small effect of carbon dioxide on oxygen affinity.</title>
        <authorList>
            <person name="Kleinschmidt T."/>
            <person name="Ruecknagel K.P."/>
            <person name="Weber R.E."/>
            <person name="Koop B.F."/>
            <person name="Braunitzer G."/>
        </authorList>
    </citation>
    <scope>PROTEIN SEQUENCE</scope>
</reference>
<dbReference type="PIR" id="B29391">
    <property type="entry name" value="B29391"/>
</dbReference>
<dbReference type="SMR" id="P11756"/>
<dbReference type="GO" id="GO:0072562">
    <property type="term" value="C:blood microparticle"/>
    <property type="evidence" value="ECO:0007669"/>
    <property type="project" value="TreeGrafter"/>
</dbReference>
<dbReference type="GO" id="GO:0031838">
    <property type="term" value="C:haptoglobin-hemoglobin complex"/>
    <property type="evidence" value="ECO:0007669"/>
    <property type="project" value="TreeGrafter"/>
</dbReference>
<dbReference type="GO" id="GO:0005833">
    <property type="term" value="C:hemoglobin complex"/>
    <property type="evidence" value="ECO:0007669"/>
    <property type="project" value="InterPro"/>
</dbReference>
<dbReference type="GO" id="GO:0031720">
    <property type="term" value="F:haptoglobin binding"/>
    <property type="evidence" value="ECO:0007669"/>
    <property type="project" value="TreeGrafter"/>
</dbReference>
<dbReference type="GO" id="GO:0020037">
    <property type="term" value="F:heme binding"/>
    <property type="evidence" value="ECO:0007669"/>
    <property type="project" value="InterPro"/>
</dbReference>
<dbReference type="GO" id="GO:0031721">
    <property type="term" value="F:hemoglobin alpha binding"/>
    <property type="evidence" value="ECO:0007669"/>
    <property type="project" value="TreeGrafter"/>
</dbReference>
<dbReference type="GO" id="GO:0046872">
    <property type="term" value="F:metal ion binding"/>
    <property type="evidence" value="ECO:0007669"/>
    <property type="project" value="UniProtKB-KW"/>
</dbReference>
<dbReference type="GO" id="GO:0043177">
    <property type="term" value="F:organic acid binding"/>
    <property type="evidence" value="ECO:0007669"/>
    <property type="project" value="TreeGrafter"/>
</dbReference>
<dbReference type="GO" id="GO:0019825">
    <property type="term" value="F:oxygen binding"/>
    <property type="evidence" value="ECO:0007669"/>
    <property type="project" value="InterPro"/>
</dbReference>
<dbReference type="GO" id="GO:0005344">
    <property type="term" value="F:oxygen carrier activity"/>
    <property type="evidence" value="ECO:0007669"/>
    <property type="project" value="UniProtKB-KW"/>
</dbReference>
<dbReference type="GO" id="GO:0004601">
    <property type="term" value="F:peroxidase activity"/>
    <property type="evidence" value="ECO:0007669"/>
    <property type="project" value="TreeGrafter"/>
</dbReference>
<dbReference type="GO" id="GO:0042744">
    <property type="term" value="P:hydrogen peroxide catabolic process"/>
    <property type="evidence" value="ECO:0007669"/>
    <property type="project" value="TreeGrafter"/>
</dbReference>
<dbReference type="CDD" id="cd08925">
    <property type="entry name" value="Hb-beta-like"/>
    <property type="match status" value="1"/>
</dbReference>
<dbReference type="FunFam" id="1.10.490.10:FF:000001">
    <property type="entry name" value="Hemoglobin subunit beta"/>
    <property type="match status" value="1"/>
</dbReference>
<dbReference type="Gene3D" id="1.10.490.10">
    <property type="entry name" value="Globins"/>
    <property type="match status" value="1"/>
</dbReference>
<dbReference type="InterPro" id="IPR000971">
    <property type="entry name" value="Globin"/>
</dbReference>
<dbReference type="InterPro" id="IPR009050">
    <property type="entry name" value="Globin-like_sf"/>
</dbReference>
<dbReference type="InterPro" id="IPR012292">
    <property type="entry name" value="Globin/Proto"/>
</dbReference>
<dbReference type="InterPro" id="IPR002337">
    <property type="entry name" value="Hemoglobin_b"/>
</dbReference>
<dbReference type="InterPro" id="IPR050056">
    <property type="entry name" value="Hemoglobin_oxygen_transport"/>
</dbReference>
<dbReference type="PANTHER" id="PTHR11442">
    <property type="entry name" value="HEMOGLOBIN FAMILY MEMBER"/>
    <property type="match status" value="1"/>
</dbReference>
<dbReference type="PANTHER" id="PTHR11442:SF42">
    <property type="entry name" value="HEMOGLOBIN SUBUNIT BETA"/>
    <property type="match status" value="1"/>
</dbReference>
<dbReference type="Pfam" id="PF00042">
    <property type="entry name" value="Globin"/>
    <property type="match status" value="1"/>
</dbReference>
<dbReference type="PRINTS" id="PR00814">
    <property type="entry name" value="BETAHAEM"/>
</dbReference>
<dbReference type="SUPFAM" id="SSF46458">
    <property type="entry name" value="Globin-like"/>
    <property type="match status" value="1"/>
</dbReference>
<dbReference type="PROSITE" id="PS01033">
    <property type="entry name" value="GLOBIN"/>
    <property type="match status" value="1"/>
</dbReference>
<name>HBB_TADBR</name>
<keyword id="KW-0007">Acetylation</keyword>
<keyword id="KW-0903">Direct protein sequencing</keyword>
<keyword id="KW-0349">Heme</keyword>
<keyword id="KW-0408">Iron</keyword>
<keyword id="KW-0479">Metal-binding</keyword>
<keyword id="KW-0561">Oxygen transport</keyword>
<keyword id="KW-0597">Phosphoprotein</keyword>
<keyword id="KW-0702">S-nitrosylation</keyword>
<keyword id="KW-0813">Transport</keyword>
<feature type="chain" id="PRO_0000053121" description="Hemoglobin subunit beta">
    <location>
        <begin position="1"/>
        <end position="146"/>
    </location>
</feature>
<feature type="domain" description="Globin" evidence="3">
    <location>
        <begin position="2"/>
        <end position="146"/>
    </location>
</feature>
<feature type="binding site" description="distal binding residue">
    <location>
        <position position="63"/>
    </location>
    <ligand>
        <name>heme b</name>
        <dbReference type="ChEBI" id="CHEBI:60344"/>
    </ligand>
    <ligandPart>
        <name>Fe</name>
        <dbReference type="ChEBI" id="CHEBI:18248"/>
    </ligandPart>
</feature>
<feature type="binding site" description="proximal binding residue">
    <location>
        <position position="92"/>
    </location>
    <ligand>
        <name>heme b</name>
        <dbReference type="ChEBI" id="CHEBI:60344"/>
    </ligand>
    <ligandPart>
        <name>Fe</name>
        <dbReference type="ChEBI" id="CHEBI:18248"/>
    </ligandPart>
</feature>
<feature type="modified residue" description="N-acetylvaline" evidence="1">
    <location>
        <position position="1"/>
    </location>
</feature>
<feature type="modified residue" description="Phosphothreonine" evidence="2">
    <location>
        <position position="12"/>
    </location>
</feature>
<feature type="modified residue" description="Phosphoserine" evidence="2">
    <location>
        <position position="44"/>
    </location>
</feature>
<feature type="modified residue" description="N6-acetyllysine" evidence="2">
    <location>
        <position position="59"/>
    </location>
</feature>
<feature type="modified residue" description="N6-acetyllysine" evidence="2">
    <location>
        <position position="82"/>
    </location>
</feature>
<feature type="modified residue" description="S-nitrosocysteine" evidence="2">
    <location>
        <position position="93"/>
    </location>
</feature>
<feature type="modified residue" description="N6-acetyllysine" evidence="2">
    <location>
        <position position="144"/>
    </location>
</feature>
<organism>
    <name type="scientific">Tadarida brasiliensis</name>
    <name type="common">Brazilian free-tailed bat</name>
    <dbReference type="NCBI Taxonomy" id="9438"/>
    <lineage>
        <taxon>Eukaryota</taxon>
        <taxon>Metazoa</taxon>
        <taxon>Chordata</taxon>
        <taxon>Craniata</taxon>
        <taxon>Vertebrata</taxon>
        <taxon>Euteleostomi</taxon>
        <taxon>Mammalia</taxon>
        <taxon>Eutheria</taxon>
        <taxon>Laurasiatheria</taxon>
        <taxon>Chiroptera</taxon>
        <taxon>Yangochiroptera</taxon>
        <taxon>Molossidae</taxon>
        <taxon>Tadarida</taxon>
    </lineage>
</organism>
<evidence type="ECO:0000250" key="1">
    <source>
        <dbReference type="UniProtKB" id="P02086"/>
    </source>
</evidence>
<evidence type="ECO:0000250" key="2">
    <source>
        <dbReference type="UniProtKB" id="P68871"/>
    </source>
</evidence>
<evidence type="ECO:0000255" key="3">
    <source>
        <dbReference type="PROSITE-ProRule" id="PRU00238"/>
    </source>
</evidence>
<comment type="function">
    <text>Involved in oxygen transport from the lung to the various peripheral tissues.</text>
</comment>
<comment type="subunit">
    <text>Heterotetramer of two alpha chains and two beta chains.</text>
</comment>
<comment type="tissue specificity">
    <text>Red blood cells.</text>
</comment>
<comment type="similarity">
    <text evidence="3">Belongs to the globin family.</text>
</comment>
<sequence>VHLSGEEKGAVTALWGKVNQEEVGGEALGRLLVVYPWTQRFFDSFGDLSSASAVMGNAKVKAHGKKVLNSFSDGLKNLDNLKGAFAKLSELHCDKLHVDPENFKLLGNVLVVVLARTFGKEFTPPVQSAFQKVAAGVATALAHKYH</sequence>
<protein>
    <recommendedName>
        <fullName>Hemoglobin subunit beta</fullName>
    </recommendedName>
    <alternativeName>
        <fullName>Beta-globin</fullName>
    </alternativeName>
    <alternativeName>
        <fullName>Hemoglobin beta chain</fullName>
    </alternativeName>
</protein>
<gene>
    <name type="primary">HBB</name>
</gene>
<accession>P11756</accession>